<reference key="1">
    <citation type="journal article" date="2008" name="Proc. Natl. Acad. Sci. U.S.A.">
        <title>CYCLOPS, a mediator of symbiotic intracellular accommodation.</title>
        <authorList>
            <person name="Yano K."/>
            <person name="Yoshida S."/>
            <person name="Mueller J."/>
            <person name="Singh S."/>
            <person name="Banba M."/>
            <person name="Vickers K."/>
            <person name="Markmann K."/>
            <person name="White C."/>
            <person name="Schuller B."/>
            <person name="Sato S."/>
            <person name="Asamizu E."/>
            <person name="Tabata S."/>
            <person name="Murooka Y."/>
            <person name="Perry J."/>
            <person name="Wang T.L."/>
            <person name="Kawaguchi M."/>
            <person name="Imaizumi-Anraku H."/>
            <person name="Hayashi M."/>
            <person name="Parniske M."/>
        </authorList>
    </citation>
    <scope>NUCLEOTIDE SEQUENCE [MRNA]</scope>
    <scope>FUNCTION</scope>
    <scope>HOMODIMERIZATION</scope>
    <scope>INTERACTION WITH CCAMK</scope>
    <scope>SUBCELLULAR LOCATION</scope>
    <scope>TISSUE SPECIFICITY</scope>
    <scope>INDUCTION BY RHIZOBIA</scope>
    <scope>PHOSPHORYLATION</scope>
    <scope>DISRUPTION PHENOTYPE</scope>
</reference>
<reference key="2">
    <citation type="journal article" date="2016" name="Curr. Biol.">
        <title>A CCaMK-CYCLOPS-DELLA complex activates transcription of RAM1 to regulate arbuscule branching.</title>
        <authorList>
            <person name="Pimprikar P."/>
            <person name="Carbonnel S."/>
            <person name="Paries M."/>
            <person name="Katzer K."/>
            <person name="Klingl V."/>
            <person name="Bohmer M.J."/>
            <person name="Karl L."/>
            <person name="Floss D.S."/>
            <person name="Harrison M.J."/>
            <person name="Parniske M."/>
            <person name="Gutjahr C."/>
        </authorList>
    </citation>
    <scope>FUNCTION</scope>
    <scope>DISRUPTION PHENOTYPE</scope>
    <source>
        <strain>cv. Gifu</strain>
    </source>
</reference>
<reference key="3">
    <citation type="journal article" date="2017" name="New Phytol.">
        <title>The ERN1 transcription factor gene is a target of the CCaMK/CYCLOPS complex and controls rhizobial infection in Lotus japonicus.</title>
        <authorList>
            <person name="Cerri M.R."/>
            <person name="Wang Q."/>
            <person name="Stolz P."/>
            <person name="Folgmann J."/>
            <person name="Frances L."/>
            <person name="Katzer K."/>
            <person name="Li X."/>
            <person name="Heckmann A.B."/>
            <person name="Wang T.L."/>
            <person name="Downie J.A."/>
            <person name="Klingl A."/>
            <person name="de Carvalho-Niebel F."/>
            <person name="Xie F."/>
            <person name="Parniske M."/>
        </authorList>
    </citation>
    <scope>FUNCTION</scope>
</reference>
<gene>
    <name evidence="6" type="primary">CYCLOPS</name>
    <name evidence="7" type="synonym">IPD3</name>
</gene>
<name>CCLOP_LOTJA</name>
<keyword id="KW-0175">Coiled coil</keyword>
<keyword id="KW-0536">Nodulation</keyword>
<keyword id="KW-0539">Nucleus</keyword>
<comment type="function">
    <text evidence="3 4 5">Involved in symbiotic signaling. Required for root infection by symbiotic rhizobia, infection thread (IT) formation, and nodule development (PubMed:19074278). Probably not involved in nodule organogenesis (PubMed:19074278). Involved in arbuscular mycorrhizal (AM) symbiosis (PubMed:19074278). Required for fungal infection of the outer cortical cell layers, and for arbuscule development during the AM symbiosis, by binding, as a complex comprising CCaMK, CYCLOPS, and DELLA, to RAM1 promoter cis element thus promoting its expression (PubMed:19074278, PubMed:27020747). Acts downstream of CCAMK (PubMed:19074278). Binds to the promoter of ERN1 and strongly transactivates ERN1, a transcriptional regulator required for nodulation (PubMed:28503742).</text>
</comment>
<comment type="subunit">
    <text evidence="3">Forms homodimers. Interacts with CCAMK.</text>
</comment>
<comment type="interaction">
    <interactant intactId="EBI-15746220">
        <id>A9XMT3</id>
    </interactant>
    <interactant intactId="EBI-15746225">
        <id>A0AAR7</id>
        <label>CCAMK</label>
    </interactant>
    <organismsDiffer>false</organismsDiffer>
    <experiments>4</experiments>
</comment>
<comment type="subcellular location">
    <subcellularLocation>
        <location evidence="3">Nucleus</location>
    </subcellularLocation>
</comment>
<comment type="tissue specificity">
    <text evidence="3">Expressed in roots.</text>
</comment>
<comment type="induction">
    <text evidence="3">Induced in nodules 21 days after rhizobial inoculation.</text>
</comment>
<comment type="PTM">
    <text evidence="3">Phosphorylated at the N-terminus by CCAMK.</text>
</comment>
<comment type="disruption phenotype">
    <text evidence="3 4">No visible phenotype under normal growth conditions, but roots of mutant plants are impaired in the interaction with both rhizobia and the arbuscular mycorrhiza (AM) fungus Glomus intraradices (PubMed:19074278, PubMed:27020747). Stunted growth when grown in nitrogen-limiting conditions and in presence of Mesorhizobium loti (PubMed:19074278).</text>
</comment>
<comment type="miscellaneous">
    <text evidence="3">Hairy roots of ipd3 mutant plants expressing a constitutively active form of CCAMK exhibit spontaneous nodule formation in the absence of rhizobia.</text>
</comment>
<comment type="similarity">
    <text evidence="7">Belongs to the CYCLOPS family.</text>
</comment>
<sequence>MEGRGFSGLYRNSSEELFLKTVMESPIGMPVPSMEMLGFKNVSQGFRADSEELFKRWLTNGEGYNSSSIGFSSRLSKRISTELVNGSNQLQVGVASDGRNNDKPFIQNNLLANDVSGDFNFPIRDPVDRELQPSNLFLAKAWFLSDQRMTRSRSSELRRRYSEMQNGLATQGIESICMDPQHGAEATKQEVANFNGYNYLSMCELPSQKGSFMSPSNSCSSNFNTPQFGDMDKVSSCVSMLKGTLQRRRLSSQLEKEAAEDDLNGIFYPQEPLFQTGFDQGQENWSNQTPVNVQVDSIGEVKDHGVLQTLEGSTNPVVDGFANQINQIYVGTASGEPSQSESSNAAPVISSGLDTCEGPINSNQTLCESSWKQVGVSKSSENTQNRVKGFREQIMDNLKDDKKRKSLERYGSITSAVSDDKGDTTKKRRVERSRKMAEAKERNSTPSVPSDMQAVLKRCENLEKEVRSLKLNLSFMNRKDSEQTKQIEDLQKQNEELADEKERLLEEIERILSETEKM</sequence>
<feature type="chain" id="PRO_0000444702" description="Protein CYCLOPS">
    <location>
        <begin position="1"/>
        <end position="518"/>
    </location>
</feature>
<feature type="region of interest" description="Disordered" evidence="2">
    <location>
        <begin position="401"/>
        <end position="451"/>
    </location>
</feature>
<feature type="coiled-coil region" evidence="1">
    <location>
        <begin position="452"/>
        <end position="518"/>
    </location>
</feature>
<feature type="short sequence motif" description="Nuclear localization signal" evidence="1">
    <location>
        <begin position="402"/>
        <end position="405"/>
    </location>
</feature>
<feature type="short sequence motif" description="Nuclear localization signal" evidence="1">
    <location>
        <begin position="426"/>
        <end position="429"/>
    </location>
</feature>
<feature type="compositionally biased region" description="Basic and acidic residues" evidence="2">
    <location>
        <begin position="433"/>
        <end position="443"/>
    </location>
</feature>
<protein>
    <recommendedName>
        <fullName evidence="6">Protein CYCLOPS</fullName>
        <shortName evidence="6">LjCYCLOPS</shortName>
    </recommendedName>
    <alternativeName>
        <fullName evidence="7">Protein IPD3 homolog</fullName>
    </alternativeName>
</protein>
<dbReference type="EMBL" id="EF569221">
    <property type="protein sequence ID" value="ABU63668.1"/>
    <property type="molecule type" value="mRNA"/>
</dbReference>
<dbReference type="SMR" id="A9XMT3"/>
<dbReference type="DIP" id="DIP-48654N"/>
<dbReference type="IntAct" id="A9XMT3">
    <property type="interactions" value="1"/>
</dbReference>
<dbReference type="OMA" id="WLMNGEA"/>
<dbReference type="OrthoDB" id="1737017at2759"/>
<dbReference type="GO" id="GO:0005634">
    <property type="term" value="C:nucleus"/>
    <property type="evidence" value="ECO:0000314"/>
    <property type="project" value="UniProtKB"/>
</dbReference>
<dbReference type="GO" id="GO:0003700">
    <property type="term" value="F:DNA-binding transcription factor activity"/>
    <property type="evidence" value="ECO:0000314"/>
    <property type="project" value="UniProtKB"/>
</dbReference>
<dbReference type="GO" id="GO:0042803">
    <property type="term" value="F:protein homodimerization activity"/>
    <property type="evidence" value="ECO:0000353"/>
    <property type="project" value="UniProtKB"/>
</dbReference>
<dbReference type="GO" id="GO:0043565">
    <property type="term" value="F:sequence-specific DNA binding"/>
    <property type="evidence" value="ECO:0000314"/>
    <property type="project" value="UniProtKB"/>
</dbReference>
<dbReference type="GO" id="GO:0036377">
    <property type="term" value="P:arbuscular mycorrhizal association"/>
    <property type="evidence" value="ECO:0000315"/>
    <property type="project" value="UniProtKB"/>
</dbReference>
<dbReference type="GO" id="GO:0009877">
    <property type="term" value="P:nodulation"/>
    <property type="evidence" value="ECO:0000315"/>
    <property type="project" value="UniProtKB"/>
</dbReference>
<dbReference type="GO" id="GO:0045893">
    <property type="term" value="P:positive regulation of DNA-templated transcription"/>
    <property type="evidence" value="ECO:0000314"/>
    <property type="project" value="UniProtKB"/>
</dbReference>
<dbReference type="GO" id="GO:0006355">
    <property type="term" value="P:regulation of DNA-templated transcription"/>
    <property type="evidence" value="ECO:0000314"/>
    <property type="project" value="UniProtKB"/>
</dbReference>
<dbReference type="InterPro" id="IPR040036">
    <property type="entry name" value="CYCLOPS"/>
</dbReference>
<dbReference type="PANTHER" id="PTHR36890">
    <property type="entry name" value="PROTEIN CYCLOPS"/>
    <property type="match status" value="1"/>
</dbReference>
<dbReference type="PANTHER" id="PTHR36890:SF1">
    <property type="entry name" value="PROTEIN CYCLOPS"/>
    <property type="match status" value="1"/>
</dbReference>
<organism>
    <name type="scientific">Lotus japonicus</name>
    <name type="common">Lotus corniculatus var. japonicus</name>
    <dbReference type="NCBI Taxonomy" id="34305"/>
    <lineage>
        <taxon>Eukaryota</taxon>
        <taxon>Viridiplantae</taxon>
        <taxon>Streptophyta</taxon>
        <taxon>Embryophyta</taxon>
        <taxon>Tracheophyta</taxon>
        <taxon>Spermatophyta</taxon>
        <taxon>Magnoliopsida</taxon>
        <taxon>eudicotyledons</taxon>
        <taxon>Gunneridae</taxon>
        <taxon>Pentapetalae</taxon>
        <taxon>rosids</taxon>
        <taxon>fabids</taxon>
        <taxon>Fabales</taxon>
        <taxon>Fabaceae</taxon>
        <taxon>Papilionoideae</taxon>
        <taxon>50 kb inversion clade</taxon>
        <taxon>NPAAA clade</taxon>
        <taxon>Hologalegina</taxon>
        <taxon>robinioid clade</taxon>
        <taxon>Loteae</taxon>
        <taxon>Lotus</taxon>
    </lineage>
</organism>
<proteinExistence type="evidence at protein level"/>
<evidence type="ECO:0000255" key="1"/>
<evidence type="ECO:0000256" key="2">
    <source>
        <dbReference type="SAM" id="MobiDB-lite"/>
    </source>
</evidence>
<evidence type="ECO:0000269" key="3">
    <source>
    </source>
</evidence>
<evidence type="ECO:0000269" key="4">
    <source>
    </source>
</evidence>
<evidence type="ECO:0000269" key="5">
    <source>
    </source>
</evidence>
<evidence type="ECO:0000303" key="6">
    <source>
    </source>
</evidence>
<evidence type="ECO:0000305" key="7"/>
<accession>A9XMT3</accession>